<dbReference type="EC" id="3.6.5.-" evidence="1"/>
<dbReference type="EMBL" id="CP001047">
    <property type="protein sequence ID" value="ACF07173.1"/>
    <property type="molecule type" value="Genomic_DNA"/>
</dbReference>
<dbReference type="RefSeq" id="WP_012498130.1">
    <property type="nucleotide sequence ID" value="NC_011025.1"/>
</dbReference>
<dbReference type="SMR" id="B3PMC1"/>
<dbReference type="STRING" id="243272.MARTH_orf270"/>
<dbReference type="KEGG" id="mat:MARTH_orf270"/>
<dbReference type="eggNOG" id="COG0536">
    <property type="taxonomic scope" value="Bacteria"/>
</dbReference>
<dbReference type="HOGENOM" id="CLU_011747_2_1_14"/>
<dbReference type="Proteomes" id="UP000008812">
    <property type="component" value="Chromosome"/>
</dbReference>
<dbReference type="GO" id="GO:0005737">
    <property type="term" value="C:cytoplasm"/>
    <property type="evidence" value="ECO:0007669"/>
    <property type="project" value="UniProtKB-SubCell"/>
</dbReference>
<dbReference type="GO" id="GO:0005525">
    <property type="term" value="F:GTP binding"/>
    <property type="evidence" value="ECO:0007669"/>
    <property type="project" value="UniProtKB-UniRule"/>
</dbReference>
<dbReference type="GO" id="GO:0003924">
    <property type="term" value="F:GTPase activity"/>
    <property type="evidence" value="ECO:0007669"/>
    <property type="project" value="UniProtKB-UniRule"/>
</dbReference>
<dbReference type="GO" id="GO:0000287">
    <property type="term" value="F:magnesium ion binding"/>
    <property type="evidence" value="ECO:0007669"/>
    <property type="project" value="InterPro"/>
</dbReference>
<dbReference type="GO" id="GO:0042254">
    <property type="term" value="P:ribosome biogenesis"/>
    <property type="evidence" value="ECO:0007669"/>
    <property type="project" value="UniProtKB-UniRule"/>
</dbReference>
<dbReference type="CDD" id="cd01898">
    <property type="entry name" value="Obg"/>
    <property type="match status" value="1"/>
</dbReference>
<dbReference type="FunFam" id="2.70.210.12:FF:000001">
    <property type="entry name" value="GTPase Obg"/>
    <property type="match status" value="1"/>
</dbReference>
<dbReference type="Gene3D" id="3.30.300.350">
    <property type="entry name" value="GTP-binding protein OBG, C-terminal domain"/>
    <property type="match status" value="1"/>
</dbReference>
<dbReference type="Gene3D" id="2.70.210.12">
    <property type="entry name" value="GTP1/OBG domain"/>
    <property type="match status" value="1"/>
</dbReference>
<dbReference type="Gene3D" id="3.40.50.300">
    <property type="entry name" value="P-loop containing nucleotide triphosphate hydrolases"/>
    <property type="match status" value="1"/>
</dbReference>
<dbReference type="HAMAP" id="MF_01454">
    <property type="entry name" value="GTPase_Obg"/>
    <property type="match status" value="1"/>
</dbReference>
<dbReference type="InterPro" id="IPR031167">
    <property type="entry name" value="G_OBG"/>
</dbReference>
<dbReference type="InterPro" id="IPR006073">
    <property type="entry name" value="GTP-bd"/>
</dbReference>
<dbReference type="InterPro" id="IPR014100">
    <property type="entry name" value="GTP-bd_Obg/CgtA"/>
</dbReference>
<dbReference type="InterPro" id="IPR036346">
    <property type="entry name" value="GTP-bd_prot_GTP1/OBG_C_sf"/>
</dbReference>
<dbReference type="InterPro" id="IPR006169">
    <property type="entry name" value="GTP1_OBG_dom"/>
</dbReference>
<dbReference type="InterPro" id="IPR036726">
    <property type="entry name" value="GTP1_OBG_dom_sf"/>
</dbReference>
<dbReference type="InterPro" id="IPR045086">
    <property type="entry name" value="OBG_GTPase"/>
</dbReference>
<dbReference type="InterPro" id="IPR015349">
    <property type="entry name" value="OCT_dom"/>
</dbReference>
<dbReference type="InterPro" id="IPR027417">
    <property type="entry name" value="P-loop_NTPase"/>
</dbReference>
<dbReference type="InterPro" id="IPR005225">
    <property type="entry name" value="Small_GTP-bd"/>
</dbReference>
<dbReference type="NCBIfam" id="TIGR02729">
    <property type="entry name" value="Obg_CgtA"/>
    <property type="match status" value="1"/>
</dbReference>
<dbReference type="NCBIfam" id="TIGR03595">
    <property type="entry name" value="Obg_CgtA_exten"/>
    <property type="match status" value="1"/>
</dbReference>
<dbReference type="NCBIfam" id="NF008955">
    <property type="entry name" value="PRK12297.1"/>
    <property type="match status" value="1"/>
</dbReference>
<dbReference type="NCBIfam" id="NF008956">
    <property type="entry name" value="PRK12299.1"/>
    <property type="match status" value="1"/>
</dbReference>
<dbReference type="NCBIfam" id="TIGR00231">
    <property type="entry name" value="small_GTP"/>
    <property type="match status" value="1"/>
</dbReference>
<dbReference type="PANTHER" id="PTHR11702">
    <property type="entry name" value="DEVELOPMENTALLY REGULATED GTP-BINDING PROTEIN-RELATED"/>
    <property type="match status" value="1"/>
</dbReference>
<dbReference type="PANTHER" id="PTHR11702:SF31">
    <property type="entry name" value="MITOCHONDRIAL RIBOSOME-ASSOCIATED GTPASE 2"/>
    <property type="match status" value="1"/>
</dbReference>
<dbReference type="Pfam" id="PF09269">
    <property type="entry name" value="DUF1967"/>
    <property type="match status" value="1"/>
</dbReference>
<dbReference type="Pfam" id="PF01018">
    <property type="entry name" value="GTP1_OBG"/>
    <property type="match status" value="1"/>
</dbReference>
<dbReference type="Pfam" id="PF01926">
    <property type="entry name" value="MMR_HSR1"/>
    <property type="match status" value="1"/>
</dbReference>
<dbReference type="PIRSF" id="PIRSF002401">
    <property type="entry name" value="GTP_bd_Obg/CgtA"/>
    <property type="match status" value="1"/>
</dbReference>
<dbReference type="PRINTS" id="PR00326">
    <property type="entry name" value="GTP1OBG"/>
</dbReference>
<dbReference type="SUPFAM" id="SSF102741">
    <property type="entry name" value="Obg GTP-binding protein C-terminal domain"/>
    <property type="match status" value="1"/>
</dbReference>
<dbReference type="SUPFAM" id="SSF82051">
    <property type="entry name" value="Obg GTP-binding protein N-terminal domain"/>
    <property type="match status" value="1"/>
</dbReference>
<dbReference type="SUPFAM" id="SSF52540">
    <property type="entry name" value="P-loop containing nucleoside triphosphate hydrolases"/>
    <property type="match status" value="1"/>
</dbReference>
<dbReference type="PROSITE" id="PS51710">
    <property type="entry name" value="G_OBG"/>
    <property type="match status" value="1"/>
</dbReference>
<dbReference type="PROSITE" id="PS51883">
    <property type="entry name" value="OBG"/>
    <property type="match status" value="1"/>
</dbReference>
<dbReference type="PROSITE" id="PS51881">
    <property type="entry name" value="OCT"/>
    <property type="match status" value="1"/>
</dbReference>
<proteinExistence type="inferred from homology"/>
<keyword id="KW-0963">Cytoplasm</keyword>
<keyword id="KW-0342">GTP-binding</keyword>
<keyword id="KW-0378">Hydrolase</keyword>
<keyword id="KW-0460">Magnesium</keyword>
<keyword id="KW-0479">Metal-binding</keyword>
<keyword id="KW-0547">Nucleotide-binding</keyword>
<keyword id="KW-1185">Reference proteome</keyword>
<feature type="chain" id="PRO_0000386067" description="GTPase Obg">
    <location>
        <begin position="1"/>
        <end position="422"/>
    </location>
</feature>
<feature type="domain" description="Obg" evidence="3">
    <location>
        <begin position="1"/>
        <end position="156"/>
    </location>
</feature>
<feature type="domain" description="OBG-type G" evidence="1">
    <location>
        <begin position="157"/>
        <end position="324"/>
    </location>
</feature>
<feature type="domain" description="OCT" evidence="2">
    <location>
        <begin position="342"/>
        <end position="420"/>
    </location>
</feature>
<feature type="binding site" evidence="1">
    <location>
        <begin position="163"/>
        <end position="170"/>
    </location>
    <ligand>
        <name>GTP</name>
        <dbReference type="ChEBI" id="CHEBI:37565"/>
    </ligand>
</feature>
<feature type="binding site" evidence="1">
    <location>
        <position position="170"/>
    </location>
    <ligand>
        <name>Mg(2+)</name>
        <dbReference type="ChEBI" id="CHEBI:18420"/>
    </ligand>
</feature>
<feature type="binding site" evidence="1">
    <location>
        <begin position="188"/>
        <end position="192"/>
    </location>
    <ligand>
        <name>GTP</name>
        <dbReference type="ChEBI" id="CHEBI:37565"/>
    </ligand>
</feature>
<feature type="binding site" evidence="1">
    <location>
        <position position="190"/>
    </location>
    <ligand>
        <name>Mg(2+)</name>
        <dbReference type="ChEBI" id="CHEBI:18420"/>
    </ligand>
</feature>
<feature type="binding site" evidence="1">
    <location>
        <begin position="209"/>
        <end position="212"/>
    </location>
    <ligand>
        <name>GTP</name>
        <dbReference type="ChEBI" id="CHEBI:37565"/>
    </ligand>
</feature>
<feature type="binding site" evidence="1">
    <location>
        <begin position="278"/>
        <end position="281"/>
    </location>
    <ligand>
        <name>GTP</name>
        <dbReference type="ChEBI" id="CHEBI:37565"/>
    </ligand>
</feature>
<feature type="binding site" evidence="1">
    <location>
        <begin position="305"/>
        <end position="307"/>
    </location>
    <ligand>
        <name>GTP</name>
        <dbReference type="ChEBI" id="CHEBI:37565"/>
    </ligand>
</feature>
<sequence>MKFIDEVNVLVKAGKGGDGIISFRREANVDRGGPDGGNGGRGGNVYFRGDSGLNTLLAFHYQNKISAKDGESGKPKNAYGAAGADEIVKVPLGTLVYYEDNLIADVIEPKDYLIAKGGRGGRGNLMFKSAKNTAPRICENGESGEKFALRLVLKVLADVGLVGKPSAGKSSLLNALSNAKAKTADYDFTTLVPQLGMLKYYDKSCTIADLPGLIAQASEGKGLGFQFLKHIERCKVIAHVIDFGSSLKDPILDYETIKKELKDYNLNLEALPHVIIANKSDQEIFATNLKKFKKAYPTLPIVAISALYQKNLDELKAAIFKMLEQANQQTKSNVVENEIAINITLDRDALKIRKLSENVYEIESKKVLNVVEKIPVSSLDNLWRINNKLKKLGVFELIKKHNVPEGATIKIGNFEFDWSDEE</sequence>
<evidence type="ECO:0000255" key="1">
    <source>
        <dbReference type="HAMAP-Rule" id="MF_01454"/>
    </source>
</evidence>
<evidence type="ECO:0000255" key="2">
    <source>
        <dbReference type="PROSITE-ProRule" id="PRU01229"/>
    </source>
</evidence>
<evidence type="ECO:0000255" key="3">
    <source>
        <dbReference type="PROSITE-ProRule" id="PRU01231"/>
    </source>
</evidence>
<gene>
    <name evidence="1" type="primary">obg</name>
    <name type="ordered locus">MARTH_orf270</name>
</gene>
<organism>
    <name type="scientific">Metamycoplasma arthritidis (strain 158L3-1)</name>
    <name type="common">Mycoplasma arthritidis</name>
    <dbReference type="NCBI Taxonomy" id="243272"/>
    <lineage>
        <taxon>Bacteria</taxon>
        <taxon>Bacillati</taxon>
        <taxon>Mycoplasmatota</taxon>
        <taxon>Mycoplasmoidales</taxon>
        <taxon>Metamycoplasmataceae</taxon>
        <taxon>Metamycoplasma</taxon>
    </lineage>
</organism>
<comment type="function">
    <text evidence="1">An essential GTPase which binds GTP, GDP and possibly (p)ppGpp with moderate affinity, with high nucleotide exchange rates and a fairly low GTP hydrolysis rate. Plays a role in control of the cell cycle, stress response, ribosome biogenesis and in those bacteria that undergo differentiation, in morphogenesis control.</text>
</comment>
<comment type="cofactor">
    <cofactor evidence="1">
        <name>Mg(2+)</name>
        <dbReference type="ChEBI" id="CHEBI:18420"/>
    </cofactor>
</comment>
<comment type="subunit">
    <text evidence="1">Monomer.</text>
</comment>
<comment type="subcellular location">
    <subcellularLocation>
        <location evidence="1">Cytoplasm</location>
    </subcellularLocation>
</comment>
<comment type="similarity">
    <text evidence="1">Belongs to the TRAFAC class OBG-HflX-like GTPase superfamily. OBG GTPase family.</text>
</comment>
<name>OBG_META1</name>
<reference key="1">
    <citation type="journal article" date="2008" name="Infect. Immun.">
        <title>Genome of Mycoplasma arthritidis.</title>
        <authorList>
            <person name="Dybvig K."/>
            <person name="Zuhua C."/>
            <person name="Lao P."/>
            <person name="Jordan D.S."/>
            <person name="French C.T."/>
            <person name="Tu A.H."/>
            <person name="Loraine A.E."/>
        </authorList>
    </citation>
    <scope>NUCLEOTIDE SEQUENCE [LARGE SCALE GENOMIC DNA]</scope>
    <source>
        <strain>158L3-1</strain>
    </source>
</reference>
<protein>
    <recommendedName>
        <fullName evidence="1">GTPase Obg</fullName>
        <ecNumber evidence="1">3.6.5.-</ecNumber>
    </recommendedName>
    <alternativeName>
        <fullName evidence="1">GTP-binding protein Obg</fullName>
    </alternativeName>
</protein>
<accession>B3PMC1</accession>